<accession>Q700C7</accession>
<accession>Q9FK20</accession>
<proteinExistence type="evidence at protein level"/>
<evidence type="ECO:0000255" key="1">
    <source>
        <dbReference type="PROSITE-ProRule" id="PRU00981"/>
    </source>
</evidence>
<evidence type="ECO:0000256" key="2">
    <source>
        <dbReference type="SAM" id="MobiDB-lite"/>
    </source>
</evidence>
<evidence type="ECO:0000269" key="3">
    <source>
    </source>
</evidence>
<evidence type="ECO:0000269" key="4">
    <source>
    </source>
</evidence>
<evidence type="ECO:0000269" key="5">
    <source>
    </source>
</evidence>
<evidence type="ECO:0000269" key="6">
    <source>
    </source>
</evidence>
<evidence type="ECO:0000269" key="7">
    <source>
    </source>
</evidence>
<evidence type="ECO:0000269" key="8">
    <source>
    </source>
</evidence>
<evidence type="ECO:0000269" key="9">
    <source>
    </source>
</evidence>
<evidence type="ECO:0000269" key="10">
    <source>
    </source>
</evidence>
<evidence type="ECO:0000269" key="11">
    <source>
    </source>
</evidence>
<evidence type="ECO:0000269" key="12">
    <source>
    </source>
</evidence>
<evidence type="ECO:0000269" key="13">
    <source>
    </source>
</evidence>
<evidence type="ECO:0000269" key="14">
    <source>
    </source>
</evidence>
<evidence type="ECO:0000303" key="15">
    <source>
    </source>
</evidence>
<evidence type="ECO:0000303" key="16">
    <source>
    </source>
</evidence>
<evidence type="ECO:0000303" key="17">
    <source>
    </source>
</evidence>
<evidence type="ECO:0000303" key="18">
    <source>
    </source>
</evidence>
<evidence type="ECO:0000305" key="19"/>
<evidence type="ECO:0000305" key="20">
    <source>
    </source>
</evidence>
<evidence type="ECO:0000312" key="21">
    <source>
        <dbReference type="Araport" id="AT5G53210"/>
    </source>
</evidence>
<evidence type="ECO:0000312" key="22">
    <source>
        <dbReference type="EMBL" id="BAB09783.1"/>
    </source>
</evidence>
<feature type="chain" id="PRO_0000358856" description="Transcription factor SPEECHLESS">
    <location>
        <begin position="1"/>
        <end position="364"/>
    </location>
</feature>
<feature type="domain" description="bHLH" evidence="1">
    <location>
        <begin position="99"/>
        <end position="150"/>
    </location>
</feature>
<feature type="region of interest" description="Disordered" evidence="2">
    <location>
        <begin position="35"/>
        <end position="109"/>
    </location>
</feature>
<feature type="region of interest" description="Basic motif" evidence="1">
    <location>
        <begin position="99"/>
        <end position="112"/>
    </location>
</feature>
<feature type="region of interest" description="Helix-loop-helix motif" evidence="1">
    <location>
        <begin position="113"/>
        <end position="150"/>
    </location>
</feature>
<feature type="region of interest" description="Disordered" evidence="2">
    <location>
        <begin position="171"/>
        <end position="227"/>
    </location>
</feature>
<feature type="compositionally biased region" description="Polar residues" evidence="2">
    <location>
        <begin position="40"/>
        <end position="53"/>
    </location>
</feature>
<feature type="compositionally biased region" description="Acidic residues" evidence="2">
    <location>
        <begin position="79"/>
        <end position="92"/>
    </location>
</feature>
<feature type="compositionally biased region" description="Pro residues" evidence="2">
    <location>
        <begin position="175"/>
        <end position="193"/>
    </location>
</feature>
<feature type="compositionally biased region" description="Basic residues" evidence="2">
    <location>
        <begin position="196"/>
        <end position="205"/>
    </location>
</feature>
<feature type="compositionally biased region" description="Pro residues" evidence="2">
    <location>
        <begin position="209"/>
        <end position="218"/>
    </location>
</feature>
<feature type="modified residue" description="Phosphoserine; by ASK7" evidence="8">
    <location>
        <position position="38"/>
    </location>
</feature>
<feature type="modified residue" description="Phosphothreonine; by ASK7" evidence="8">
    <location>
        <position position="40"/>
    </location>
</feature>
<feature type="modified residue" description="Phosphoserine; by ASK7" evidence="8">
    <location>
        <position position="43"/>
    </location>
</feature>
<feature type="modified residue" description="Phosphothreonine; by ASK7" evidence="8">
    <location>
        <position position="44"/>
    </location>
</feature>
<feature type="modified residue" description="Phosphoserine; by ASK7" evidence="8">
    <location>
        <position position="65"/>
    </location>
</feature>
<feature type="modified residue" description="Phosphoserine; by ASK7" evidence="8">
    <location>
        <position position="171"/>
    </location>
</feature>
<feature type="modified residue" description="Phosphoserine; by ASK7, MPK3 and MPK6" evidence="8 20">
    <location>
        <position position="177"/>
    </location>
</feature>
<feature type="modified residue" description="Phosphoserine; by ASK7" evidence="8">
    <location>
        <position position="181"/>
    </location>
</feature>
<feature type="modified residue" description="Phosphoserine; by CDKA-1, ASK7, MPK3 and MPK6" evidence="8 10 20">
    <location>
        <position position="186"/>
    </location>
</feature>
<feature type="modified residue" description="Phosphoserine; by MPK3 and MPK6" evidence="6">
    <location>
        <position position="193"/>
    </location>
</feature>
<feature type="modified residue" description="Phosphoserine; by MPK3 and MPK6" evidence="6">
    <location>
        <position position="211"/>
    </location>
</feature>
<feature type="modified residue" description="Phosphothreonine; by ASK7, MPK3 and MPK6" evidence="6 8">
    <location>
        <position position="214"/>
    </location>
</feature>
<feature type="modified residue" description="Phosphoserine; by ASK7, MPK3 and MPK6" evidence="6 8">
    <location>
        <position position="219"/>
    </location>
</feature>
<feature type="mutagenesis site" description="Extra divisions outside the stomatal cell lineage and reduced phosphorylation by ASK7; when associated with A-44." evidence="8 10">
    <original>S</original>
    <variation>A</variation>
    <location>
        <position position="38"/>
    </location>
</feature>
<feature type="mutagenesis site" description="Extra divisions outside the stomatal cell lineage and reduced phosphorylation by ASK7; when associated with A-38." evidence="8 10">
    <original>T</original>
    <variation>A</variation>
    <location>
        <position position="44"/>
    </location>
</feature>
<feature type="mutagenesis site" description="Extra divisions outside the stomatal cell lineage and reduced phosphorylation by ASK7." evidence="8">
    <original>S</original>
    <variation>A</variation>
    <location>
        <position position="65"/>
    </location>
</feature>
<feature type="mutagenesis site" description="Plants are fertile and have a normal growth, but they form few stomata, some of them clustered, in cotyledons and leaves, and lack stomata in hypocotyls." evidence="13">
    <original>HVTVERNRR</original>
    <variation>PVTVPRNRP</variation>
    <location>
        <begin position="104"/>
        <end position="112"/>
    </location>
</feature>
<feature type="mutagenesis site" description="In spch-5; normal growth, but extremely low number of sometimes clustered stomata in leaves and stomata free hypocotyls due to decreased ability to initiate and amplify lineages, defects in asymmetric cell fate allocation, and misorientation of asymmetric division planes. These phenotypes are partly rescued by brassinosteroids (BRs) by rescuing the expression of a set of target genes." evidence="13">
    <original>R</original>
    <variation>W</variation>
    <location>
        <position position="111"/>
    </location>
</feature>
<feature type="mutagenesis site" description="In delta-93; impaired MPK3/MPK6 mediated phosphorylation and large clusters of stomata in leaves epidermis." evidence="6">
    <location>
        <begin position="171"/>
        <end position="264"/>
    </location>
</feature>
<feature type="mutagenesis site" description="In delta-49; reduced MPK3/MPK6 mediated phosphorylation and excessive numbers of asymmetric cell divisions in leaves epidermis leading to the creation of cells with meristemoid morphology, but fails to produce stomata." evidence="6">
    <location>
        <begin position="171"/>
        <end position="220"/>
    </location>
</feature>
<feature type="mutagenesis site" description="Strong reduction of CDKA-1-mediated phosphorylation. Unable to rescue stomatal defects in disrupted mutants. Triggers excess physically asymmetric divisions but not stomata formation." evidence="10">
    <original>S</original>
    <variation>A</variation>
    <location>
        <position position="186"/>
    </location>
</feature>
<feature type="mutagenesis site" description="Phosphomimetic, presence of stomatal clusters and increased stomatal density, can complement stomatal production defects associated with inactive CDKA-1." evidence="10">
    <original>S</original>
    <variation>D</variation>
    <location>
        <position position="186"/>
    </location>
</feature>
<feature type="mutagenesis site" description="Unable to rescue disruption phenotype. Ectopic stomata formation and increased accumulation; when associated with A-211, A-214, A-219 and A-255. Ectopic asymmetric cell divisions, but fails to produce stomata, and reduced repression by osmotic stress (e.g. mannitol); when associated with A-211, A-214 and A-219." evidence="6">
    <original>S</original>
    <variation>A</variation>
    <location>
        <position position="193"/>
    </location>
</feature>
<feature type="mutagenesis site" description="Ectopic stomata formation and increased accumulation; when associated with A-193, A-214, A-219 and A-255. Ectopic asymmetric cell divisions, but fails to produce stomata, and reduced repression by osmotic stress (e.g. mannitol); when associated with A-193, A-214 and A-219." evidence="6">
    <original>S</original>
    <variation>A</variation>
    <location>
        <position position="211"/>
    </location>
</feature>
<feature type="mutagenesis site" description="Ectopic stomata formation and increased accumulation; when associated with A-193, A-211, A-219 and A-255. Ectopic asymmetric cell divisions, but fails to produce stomata, and reduced repression by osmotic stress (e.g. mannitol); when associated with A-193, A-211 and A-219." evidence="6">
    <original>T</original>
    <variation>A</variation>
    <location>
        <position position="214"/>
    </location>
</feature>
<feature type="mutagenesis site" description="Ectopic stomata formation and increased accumulation; when associated with A-193, A-211, A-214 and A-255. Ectopic asymmetric cell divisions, but fails to produce stomata, and reduced repression by osmotic stress (e.g. mannitol); when associated with A-193, A-211 and A-214." evidence="6">
    <original>S</original>
    <variation>A</variation>
    <location>
        <position position="219"/>
    </location>
</feature>
<feature type="mutagenesis site" description="In delta-31; reduced MPK3/MPK6 mediated phosphorylation and excessive numbers of asymmetric cell divisions in leaves epidermis leading to the creation of cells with meristemoid morphology." evidence="6">
    <location>
        <begin position="237"/>
        <end position="267"/>
    </location>
</feature>
<feature type="mutagenesis site" description="Ectopic stomata formation and increased accumulation; when associated with A-193, A-211, A-214 and A-219." evidence="6">
    <original>S</original>
    <variation>A</variation>
    <location>
        <position position="255"/>
    </location>
</feature>
<feature type="mutagenesis site" description="In spch-2; reduced stomatal index." evidence="3">
    <original>V</original>
    <variation>M</variation>
    <location>
        <position position="290"/>
    </location>
</feature>
<feature type="mutagenesis site" description="In spch-1; no stomata." evidence="3">
    <location>
        <begin position="358"/>
        <end position="364"/>
    </location>
</feature>
<keyword id="KW-0010">Activator</keyword>
<keyword id="KW-0217">Developmental protein</keyword>
<keyword id="KW-0238">DNA-binding</keyword>
<keyword id="KW-0539">Nucleus</keyword>
<keyword id="KW-0597">Phosphoprotein</keyword>
<keyword id="KW-1185">Reference proteome</keyword>
<keyword id="KW-0804">Transcription</keyword>
<keyword id="KW-0805">Transcription regulation</keyword>
<comment type="function">
    <text evidence="3 4 5 6 8 9 10 11 13">Transcription factor acting as an integration node for stomata and brassinosteroid (BR) signaling pathways to control stomatal initiation and development (PubMed:22466366, PubMed:28507175). Activates transcription when in the presence of SCRM/ICE1 (PubMed:28507175). Functions as a dimer with SCRM or SCRM2 during stomatal initiation (PubMed:18641265). Required for the initiation, the spacing and the formation of stomata, by promoting the first asymmetric cell divisions (PubMed:19008449, PubMed:25680231, PubMed:25843888). Together with FMA and MUTE, modulates the stomata formation. Involved in the regulation of growth reduction under osmotic stress (e.g. mannitol), associated with a quick decrease of meristemoid mother cells (MMCs) number lower stomatal index and density (PubMed:25381317).</text>
</comment>
<comment type="activity regulation">
    <text evidence="6 12">Negatively regulated through phosphorylation by the MAPK module (PubMed:19008449). Activity is constrained by polarized BASL in stomatal lineage ground cells (SLGCs) undergoing ACD (PubMed:27746029).</text>
</comment>
<comment type="subunit">
    <text evidence="5 10 13 19">Homodimer (Probable). Forms dimers with SCRM and SCRM2 (PubMed:18641265, PubMed:28507175). May interact with CDKA-1 (PubMed:25680231).</text>
</comment>
<comment type="interaction">
    <interactant intactId="EBI-15976443">
        <id>Q700C7</id>
    </interactant>
    <interactant intactId="EBI-4457470">
        <id>Q9C4Z6</id>
        <label>RACK1B</label>
    </interactant>
    <organismsDiffer>false</organismsDiffer>
    <experiments>3</experiments>
</comment>
<comment type="subcellular location">
    <subcellularLocation>
        <location evidence="1 6">Nucleus</location>
    </subcellularLocation>
</comment>
<comment type="tissue specificity">
    <text evidence="3 5 6 8 10 12">Expressed in developing leaf epidermis (PubMed:17183265). Reduced accumulation in the stomatal lineage ground cells (SLGCs) where BASL is polarized in the cell cortex (PubMed:27746029). Observed in small cells of non-protruding hypocotyl cell files and of developing cotyledon epidermis (PubMed:22466366). Restricted to meristemoids (stomatal precursor cell) in leaves epidermis, mostly in dividing cells of non-protruding cell files (PubMed:18641265, PubMed:19008449, PubMed:25680231).</text>
</comment>
<comment type="developmental stage">
    <text evidence="3 5 6">First observed in a subset of undifferentiated epidermal cells, often by pair of neighboring cells. Later confined to small epidermal cells, including cells that have recently divided next to stomatal lineage cells. Also expressed in stomatal lineage cells, fading out progressively during meristemoid determination.</text>
</comment>
<comment type="induction">
    <text evidence="6 7 9 10">Repressed by brassinazole (BRZ), thus leading to a reduced number of stomata in hypocotyls (PubMed:25680231). Inhibited by low relative humidity (LRH) via epigenetic CG methylation, thus leading to a reduced stomatal index (PubMed:22442411). Repressed by YDA (at protein level) (PubMed:19008449). Post-transcriptional decrease of protein level in response to osmotic stress (e.g. mannitol), through the action of a mitogen-activated protein kinase (MAPK) cascade; this repression is reversed by the MAPK kinase inhibitor PD98059 (PubMed:25381317).</text>
</comment>
<comment type="PTM">
    <text evidence="6 8 10 11 14">Phosphorylated by ASK7/BIN2 and ASK3/SK12; this post-translational modification inhibits activity and limit epidermal cell proliferation (PubMed:22466366, PubMed:30429609). Phosphorylation by MPK3 and MPK6 leads to the inhibition of stomatal fate and to degradation (PubMed:19008449, PubMed:25843888). Stabilized by CDKA-1-mediated phosphorylation at Ser-186 which promotes stomatal development (PubMed:25680231).</text>
</comment>
<comment type="disruption phenotype">
    <text evidence="6 10">Stomatal defects in cotyledons and hypocotyls.</text>
</comment>
<comment type="sequence caution" evidence="19">
    <conflict type="erroneous gene model prediction">
        <sequence resource="EMBL-CDS" id="BAB09783"/>
    </conflict>
</comment>
<dbReference type="EMBL" id="DQ868373">
    <property type="protein sequence ID" value="ABI26170.1"/>
    <property type="molecule type" value="mRNA"/>
</dbReference>
<dbReference type="EMBL" id="AB013388">
    <property type="protein sequence ID" value="BAB09783.1"/>
    <property type="status" value="ALT_SEQ"/>
    <property type="molecule type" value="Genomic_DNA"/>
</dbReference>
<dbReference type="EMBL" id="CP002688">
    <property type="protein sequence ID" value="AED96323.1"/>
    <property type="molecule type" value="Genomic_DNA"/>
</dbReference>
<dbReference type="EMBL" id="AJ630498">
    <property type="protein sequence ID" value="CAG25871.1"/>
    <property type="molecule type" value="mRNA"/>
</dbReference>
<dbReference type="EMBL" id="AY568670">
    <property type="protein sequence ID" value="AAS79560.1"/>
    <property type="molecule type" value="mRNA"/>
</dbReference>
<dbReference type="RefSeq" id="NP_200133.2">
    <property type="nucleotide sequence ID" value="NM_124700.3"/>
</dbReference>
<dbReference type="SMR" id="Q700C7"/>
<dbReference type="BioGRID" id="20647">
    <property type="interactions" value="3"/>
</dbReference>
<dbReference type="DIP" id="DIP-61849N"/>
<dbReference type="FunCoup" id="Q700C7">
    <property type="interactions" value="270"/>
</dbReference>
<dbReference type="IntAct" id="Q700C7">
    <property type="interactions" value="2"/>
</dbReference>
<dbReference type="STRING" id="3702.Q700C7"/>
<dbReference type="GlyGen" id="Q700C7">
    <property type="glycosylation" value="1 site"/>
</dbReference>
<dbReference type="iPTMnet" id="Q700C7"/>
<dbReference type="PaxDb" id="3702-AT5G53210.1"/>
<dbReference type="EnsemblPlants" id="AT5G53210.1">
    <property type="protein sequence ID" value="AT5G53210.1"/>
    <property type="gene ID" value="AT5G53210"/>
</dbReference>
<dbReference type="GeneID" id="835402"/>
<dbReference type="Gramene" id="AT5G53210.1">
    <property type="protein sequence ID" value="AT5G53210.1"/>
    <property type="gene ID" value="AT5G53210"/>
</dbReference>
<dbReference type="KEGG" id="ath:AT5G53210"/>
<dbReference type="Araport" id="AT5G53210"/>
<dbReference type="TAIR" id="AT5G53210">
    <property type="gene designation" value="SPCH"/>
</dbReference>
<dbReference type="eggNOG" id="ENOG502QS6Y">
    <property type="taxonomic scope" value="Eukaryota"/>
</dbReference>
<dbReference type="HOGENOM" id="CLU_044652_0_1_1"/>
<dbReference type="InParanoid" id="Q700C7"/>
<dbReference type="OMA" id="QTRMSHI"/>
<dbReference type="OrthoDB" id="675169at2759"/>
<dbReference type="PhylomeDB" id="Q700C7"/>
<dbReference type="PRO" id="PR:Q700C7"/>
<dbReference type="Proteomes" id="UP000006548">
    <property type="component" value="Chromosome 5"/>
</dbReference>
<dbReference type="ExpressionAtlas" id="Q700C7">
    <property type="expression patterns" value="baseline and differential"/>
</dbReference>
<dbReference type="GO" id="GO:0005634">
    <property type="term" value="C:nucleus"/>
    <property type="evidence" value="ECO:0000314"/>
    <property type="project" value="TAIR"/>
</dbReference>
<dbReference type="GO" id="GO:0003677">
    <property type="term" value="F:DNA binding"/>
    <property type="evidence" value="ECO:0007669"/>
    <property type="project" value="UniProtKB-KW"/>
</dbReference>
<dbReference type="GO" id="GO:0001216">
    <property type="term" value="F:DNA-binding transcription activator activity"/>
    <property type="evidence" value="ECO:0000314"/>
    <property type="project" value="UniProtKB"/>
</dbReference>
<dbReference type="GO" id="GO:0003700">
    <property type="term" value="F:DNA-binding transcription factor activity"/>
    <property type="evidence" value="ECO:0000250"/>
    <property type="project" value="TAIR"/>
</dbReference>
<dbReference type="GO" id="GO:0046983">
    <property type="term" value="F:protein dimerization activity"/>
    <property type="evidence" value="ECO:0007669"/>
    <property type="project" value="InterPro"/>
</dbReference>
<dbReference type="GO" id="GO:0010052">
    <property type="term" value="P:guard cell differentiation"/>
    <property type="evidence" value="ECO:0007669"/>
    <property type="project" value="InterPro"/>
</dbReference>
<dbReference type="GO" id="GO:0006355">
    <property type="term" value="P:regulation of DNA-templated transcription"/>
    <property type="evidence" value="ECO:0000304"/>
    <property type="project" value="TAIR"/>
</dbReference>
<dbReference type="GO" id="GO:0047484">
    <property type="term" value="P:regulation of response to osmotic stress"/>
    <property type="evidence" value="ECO:0000315"/>
    <property type="project" value="UniProtKB"/>
</dbReference>
<dbReference type="GO" id="GO:2000038">
    <property type="term" value="P:regulation of stomatal complex development"/>
    <property type="evidence" value="ECO:0000315"/>
    <property type="project" value="UniProtKB"/>
</dbReference>
<dbReference type="GO" id="GO:0090547">
    <property type="term" value="P:response to low humidity"/>
    <property type="evidence" value="ECO:0000270"/>
    <property type="project" value="UniProtKB"/>
</dbReference>
<dbReference type="GO" id="GO:0006970">
    <property type="term" value="P:response to osmotic stress"/>
    <property type="evidence" value="ECO:0000270"/>
    <property type="project" value="UniProtKB"/>
</dbReference>
<dbReference type="GO" id="GO:0010374">
    <property type="term" value="P:stomatal complex development"/>
    <property type="evidence" value="ECO:0000315"/>
    <property type="project" value="TAIR"/>
</dbReference>
<dbReference type="CDD" id="cd11448">
    <property type="entry name" value="bHLH_AtFAMA_like"/>
    <property type="match status" value="1"/>
</dbReference>
<dbReference type="FunFam" id="4.10.280.10:FF:000061">
    <property type="entry name" value="Transcription factor SPEECHLESS"/>
    <property type="match status" value="1"/>
</dbReference>
<dbReference type="Gene3D" id="4.10.280.10">
    <property type="entry name" value="Helix-loop-helix DNA-binding domain"/>
    <property type="match status" value="1"/>
</dbReference>
<dbReference type="InterPro" id="IPR054502">
    <property type="entry name" value="bHLH-TF_ACT-like_plant"/>
</dbReference>
<dbReference type="InterPro" id="IPR011598">
    <property type="entry name" value="bHLH_dom"/>
</dbReference>
<dbReference type="InterPro" id="IPR044283">
    <property type="entry name" value="FAMA/SPEECHLESS/MUTE-like"/>
</dbReference>
<dbReference type="InterPro" id="IPR036638">
    <property type="entry name" value="HLH_DNA-bd_sf"/>
</dbReference>
<dbReference type="PANTHER" id="PTHR46684">
    <property type="entry name" value="TRANSCRIPTION FACTOR FAMA"/>
    <property type="match status" value="1"/>
</dbReference>
<dbReference type="PANTHER" id="PTHR46684:SF4">
    <property type="entry name" value="TRANSCRIPTION FACTOR SPEECHLESS"/>
    <property type="match status" value="1"/>
</dbReference>
<dbReference type="Pfam" id="PF22754">
    <property type="entry name" value="bHLH-TF_ACT-like_plant"/>
    <property type="match status" value="1"/>
</dbReference>
<dbReference type="Pfam" id="PF00010">
    <property type="entry name" value="HLH"/>
    <property type="match status" value="1"/>
</dbReference>
<dbReference type="SMART" id="SM00353">
    <property type="entry name" value="HLH"/>
    <property type="match status" value="1"/>
</dbReference>
<dbReference type="SUPFAM" id="SSF47459">
    <property type="entry name" value="HLH, helix-loop-helix DNA-binding domain"/>
    <property type="match status" value="1"/>
</dbReference>
<dbReference type="PROSITE" id="PS50888">
    <property type="entry name" value="BHLH"/>
    <property type="match status" value="1"/>
</dbReference>
<reference key="1">
    <citation type="journal article" date="2007" name="Nature">
        <title>Transcription factor control of asymmetric cell divisions that establish the stomatal lineage.</title>
        <authorList>
            <person name="MacAlister C.A."/>
            <person name="Ohashi-Ito K."/>
            <person name="Bergmann D.C."/>
        </authorList>
    </citation>
    <scope>NUCLEOTIDE SEQUENCE [MRNA]</scope>
    <scope>MUTAGENESIS OF VAL-290 AND 358-GLN--CYS-364</scope>
    <scope>FUNCTION</scope>
    <scope>DEVELOPMENTAL STAGE</scope>
    <scope>TISSUE SPECIFICITY</scope>
    <source>
        <strain>cv. Columbia</strain>
    </source>
</reference>
<reference key="2">
    <citation type="journal article" date="1998" name="DNA Res.">
        <title>Structural analysis of Arabidopsis thaliana chromosome 5. VI. Sequence features of the regions of 1,367,185 bp covered by 19 physically assigned P1 and TAC clones.</title>
        <authorList>
            <person name="Kotani H."/>
            <person name="Nakamura Y."/>
            <person name="Sato S."/>
            <person name="Asamizu E."/>
            <person name="Kaneko T."/>
            <person name="Miyajima N."/>
            <person name="Tabata S."/>
        </authorList>
    </citation>
    <scope>NUCLEOTIDE SEQUENCE [LARGE SCALE GENOMIC DNA]</scope>
    <source>
        <strain>cv. Columbia</strain>
    </source>
</reference>
<reference key="3">
    <citation type="journal article" date="2017" name="Plant J.">
        <title>Araport11: a complete reannotation of the Arabidopsis thaliana reference genome.</title>
        <authorList>
            <person name="Cheng C.Y."/>
            <person name="Krishnakumar V."/>
            <person name="Chan A.P."/>
            <person name="Thibaud-Nissen F."/>
            <person name="Schobel S."/>
            <person name="Town C.D."/>
        </authorList>
    </citation>
    <scope>GENOME REANNOTATION</scope>
    <source>
        <strain>cv. Columbia</strain>
    </source>
</reference>
<reference key="4">
    <citation type="journal article" date="2004" name="Plant Physiol.">
        <title>Genome-wide ORFeome cloning and analysis of Arabidopsis transcription factor genes.</title>
        <authorList>
            <person name="Gong W."/>
            <person name="Shen Y.-P."/>
            <person name="Ma L.-G."/>
            <person name="Pan Y."/>
            <person name="Du Y.-L."/>
            <person name="Wang D.-H."/>
            <person name="Yang J.-Y."/>
            <person name="Hu L.-D."/>
            <person name="Liu X.-F."/>
            <person name="Dong C.-X."/>
            <person name="Ma L."/>
            <person name="Chen Y.-H."/>
            <person name="Yang X.-Y."/>
            <person name="Gao Y."/>
            <person name="Zhu D."/>
            <person name="Tan X."/>
            <person name="Mu J.-Y."/>
            <person name="Zhang D.-B."/>
            <person name="Liu Y.-L."/>
            <person name="Dinesh-Kumar S.P."/>
            <person name="Li Y."/>
            <person name="Wang X.-P."/>
            <person name="Gu H.-Y."/>
            <person name="Qu L.-J."/>
            <person name="Bai S.-N."/>
            <person name="Lu Y.-T."/>
            <person name="Li J.-Y."/>
            <person name="Zhao J.-D."/>
            <person name="Zuo J."/>
            <person name="Huang H."/>
            <person name="Deng X.-W."/>
            <person name="Zhu Y.-X."/>
        </authorList>
    </citation>
    <scope>NUCLEOTIDE SEQUENCE [LARGE SCALE MRNA]</scope>
    <source>
        <strain>cv. Columbia</strain>
    </source>
</reference>
<reference key="5">
    <citation type="journal article" date="2003" name="Mol. Biol. Evol.">
        <title>The basic helix-loop-helix transcription factor family in plants: a genome-wide study of protein structure and functional diversity.</title>
        <authorList>
            <person name="Heim M.A."/>
            <person name="Jakoby M."/>
            <person name="Werber M."/>
            <person name="Martin C."/>
            <person name="Weisshaar B."/>
            <person name="Bailey P.C."/>
        </authorList>
    </citation>
    <scope>GENE FAMILY</scope>
    <scope>NOMENCLATURE</scope>
</reference>
<reference key="6">
    <citation type="journal article" date="2003" name="Plant Cell">
        <title>The Arabidopsis basic/helix-loop-helix transcription factor family.</title>
        <authorList>
            <person name="Toledo-Ortiz G."/>
            <person name="Huq E."/>
            <person name="Quail P.H."/>
        </authorList>
    </citation>
    <scope>GENE FAMILY</scope>
</reference>
<reference key="7">
    <citation type="journal article" date="2003" name="Plant Cell">
        <title>Update on the basic helix-loop-helix transcription factor gene family in Arabidopsis thaliana.</title>
        <authorList>
            <person name="Bailey P.C."/>
            <person name="Martin C."/>
            <person name="Toledo-Ortiz G."/>
            <person name="Quail P.H."/>
            <person name="Huq E."/>
            <person name="Heim M.A."/>
            <person name="Jakoby M."/>
            <person name="Werber M."/>
            <person name="Weisshaar B."/>
        </authorList>
    </citation>
    <scope>GENE FAMILY</scope>
    <scope>NOMENCLATURE</scope>
</reference>
<reference key="8">
    <citation type="journal article" date="2007" name="Bioessays">
        <title>Breaking the silence: three bHLH proteins direct cell-fate decisions during stomatal development.</title>
        <authorList>
            <person name="Pillitteri L.J."/>
            <person name="Torii K.U."/>
        </authorList>
    </citation>
    <scope>REVIEW</scope>
</reference>
<reference key="9">
    <citation type="journal article" date="2007" name="Nature">
        <title>Termination of asymmetric cell division and differentiation of stomata.</title>
        <authorList>
            <person name="Pillitteri L.J."/>
            <person name="Sloan D.B."/>
            <person name="Bogenschutz N.L."/>
            <person name="Torii K.U."/>
        </authorList>
    </citation>
    <scope>FUNCTION</scope>
</reference>
<reference key="10">
    <citation type="journal article" date="2007" name="Trends Plant Sci.">
        <title>bHLH proteins know when to make a stoma.</title>
        <authorList>
            <person name="Serna L."/>
        </authorList>
    </citation>
    <scope>REVIEW</scope>
</reference>
<reference key="11">
    <citation type="journal article" date="2008" name="Plant Cell">
        <title>SCREAM/ICE1 and SCREAM2 specify three cell-state transitional steps leading to arabidopsis stomatal differentiation.</title>
        <authorList>
            <person name="Kanaoka M.M."/>
            <person name="Pillitteri L.J."/>
            <person name="Fujii H."/>
            <person name="Yoshida Y."/>
            <person name="Bogenschutz N.L."/>
            <person name="Takabayashi J."/>
            <person name="Zhu J.-K."/>
            <person name="Torii K.U."/>
        </authorList>
    </citation>
    <scope>FUNCTION</scope>
    <scope>INTERACTION WITH SCREAM/ICE1 AND SCREAM2</scope>
    <scope>DEVELOPMENTAL STAGE</scope>
    <scope>TISSUE SPECIFICITY</scope>
</reference>
<reference key="12">
    <citation type="journal article" date="2008" name="Science">
        <title>Arabidopsis stomatal initiation is controlled by MAPK-mediated regulation of the bHLH SPEECHLESS.</title>
        <authorList>
            <person name="Lampard G.R."/>
            <person name="Macalister C.A."/>
            <person name="Bergmann D.C."/>
        </authorList>
    </citation>
    <scope>FUNCTION</scope>
    <scope>DISRUPTION PHENOTYPE</scope>
    <scope>MUTAGENESIS OF 171-SER--SER-220; 171-SER--SER-264; SER-193; SER-211; THR-214; SER-219; 237-ARG--SER-367 AND SER-255</scope>
    <scope>ACTIVITY REGULATION</scope>
    <scope>PHOSPHORYLATION AT SER-177; SER-186; SER-193; SER-211; THR-214 AND SER-219</scope>
    <scope>REPRESSION BY YDA</scope>
    <scope>SUBCELLULAR LOCATION</scope>
    <scope>TISSUE SPECIFICITY</scope>
    <scope>DEVELOPMENTAL STAGE</scope>
</reference>
<reference key="13">
    <citation type="journal article" date="2012" name="J. Exp. Bot.">
        <title>Low relative humidity triggers RNA-directed de novo DNA methylation and suppression of genes controlling stomatal development.</title>
        <authorList>
            <person name="Tricker P.J."/>
            <person name="Gibbings J.G."/>
            <person name="Rodriguez Lopez C.M."/>
            <person name="Hadley P."/>
            <person name="Wilkinson M.J."/>
        </authorList>
    </citation>
    <scope>REPRESSION BY LOW RELATIVE HUMIDITY</scope>
    <source>
        <strain>cv. Columbia</strain>
        <strain>cv. Landsberg erecta</strain>
    </source>
</reference>
<reference key="14">
    <citation type="journal article" date="2012" name="Nat. Cell Biol.">
        <title>SPEECHLESS integrates brassinosteroid and stomata signalling pathways.</title>
        <authorList>
            <person name="Gudesblat G.E."/>
            <person name="Schneider-Pizon J."/>
            <person name="Betti C."/>
            <person name="Mayerhofer J."/>
            <person name="Vanhoutte I."/>
            <person name="van Dongen W."/>
            <person name="Boeren S."/>
            <person name="Zhiponova M."/>
            <person name="de Vries S."/>
            <person name="Jonak C."/>
            <person name="Russinova E."/>
        </authorList>
    </citation>
    <scope>FUNCTION</scope>
    <scope>MUTAGENESIS OF SER-38; THR-44 AND SER-65</scope>
    <scope>PHOSPHORYLATION AT SER-38; THR-40; SER-43; THR-44; SER-65; SER-171; SER-177; SER-181; SER-186; THR-214 AND SER-219</scope>
    <scope>TISSUE SPECIFICITY</scope>
    <source>
        <strain>cv. Columbia</strain>
    </source>
</reference>
<reference key="15">
    <citation type="journal article" date="2014" name="Plant Cell Physiol.">
        <title>Arabidopsis reduces growth under osmotic stress by decreasing SPEECHLESS protein.</title>
        <authorList>
            <person name="Kumari A."/>
            <person name="Jewaria P.K."/>
            <person name="Bergmann D.C."/>
            <person name="Kakimoto T."/>
        </authorList>
    </citation>
    <scope>FUNCTION</scope>
    <scope>MUTAGENESIS OF SER-193; SER-211; THR-214 AND SER-219</scope>
    <scope>REPRESSION BY OSMOTIC STRESS</scope>
    <source>
        <strain>cv. Columbia</strain>
    </source>
</reference>
<reference key="16">
    <citation type="journal article" date="2015" name="Dev. Cell">
        <title>The BASL polarity protein controls a MAPK signaling feedback loop in asymmetric cell division.</title>
        <authorList>
            <person name="Zhang Y."/>
            <person name="Wang P."/>
            <person name="Shao W."/>
            <person name="Zhu J.-K."/>
            <person name="Dong J."/>
        </authorList>
    </citation>
    <scope>FUNCTION</scope>
    <scope>PHOSPHORYLATION</scope>
    <source>
        <strain>cv. Columbia</strain>
    </source>
</reference>
<reference key="17">
    <citation type="journal article" date="2015" name="Mol. Plant">
        <title>Phosphorylation of serine 186 of bHLH transcription factor SPEECHLESS promotes stomatal development in Arabidopsis.</title>
        <authorList>
            <person name="Yang K.-Z."/>
            <person name="Jiang M."/>
            <person name="Wang M."/>
            <person name="Xue S."/>
            <person name="Zhu L.-L."/>
            <person name="Wang H.-Z."/>
            <person name="Zou J.-J."/>
            <person name="Lee E.-K."/>
            <person name="Sack F."/>
            <person name="Le J."/>
        </authorList>
    </citation>
    <scope>FUNCTION</scope>
    <scope>DISRUPTION PHENOTYPE</scope>
    <scope>PHOSPHORYLATION AT SER-186</scope>
    <scope>MUTAGENESIS OF SER-38; THR-44 AND SER-186</scope>
    <scope>TISSUE SPECIFICITY</scope>
    <scope>REPRESSION BY BRASSINAZOLE</scope>
    <scope>INTERACTION WITH CDKA-1</scope>
    <source>
        <strain>cv. Columbia</strain>
    </source>
</reference>
<reference key="18">
    <citation type="journal article" date="2016" name="Curr. Biol.">
        <title>Phosphorylation of the polarity protein BASL differentiates asymmetric cell fate through MAPKs and SPCH.</title>
        <authorList>
            <person name="Zhang Y."/>
            <person name="Guo X."/>
            <person name="Dong J."/>
        </authorList>
    </citation>
    <scope>ACTIVITY REGULATION</scope>
    <scope>TISSUE SPECIFICITY</scope>
    <source>
        <strain>cv. Columbia</strain>
    </source>
</reference>
<reference key="19">
    <citation type="journal article" date="2017" name="Plant Physiol.">
        <title>A mutation in the bHLH domain of the SPCH transcription factor uncovers a BR-dependent mechanism for stomatal development.</title>
        <authorList>
            <person name="de Marcos A."/>
            <person name="Houbaert A."/>
            <person name="Trivino M."/>
            <person name="Delgado D."/>
            <person name="Martin-Trillo M."/>
            <person name="Russinova E."/>
            <person name="Fenoll C."/>
            <person name="Mena M."/>
        </authorList>
    </citation>
    <scope>FUNCTION</scope>
    <scope>MUTAGENESIS OF 104-HIS--ARG-112 AND ARG-111</scope>
    <scope>INTERACTION WITH SCRM/ICE1 AND SCRM2</scope>
    <source>
        <strain>cv. Columbia</strain>
    </source>
</reference>
<reference key="20">
    <citation type="journal article" date="2018" name="Nature">
        <title>POLAR-guided signalling complex assembly and localization drive asymmetric cell division.</title>
        <authorList>
            <person name="Houbaert A."/>
            <person name="Zhang C."/>
            <person name="Tiwari M."/>
            <person name="Wang K."/>
            <person name="de Marcos Serrano A."/>
            <person name="Savatin D.V."/>
            <person name="Urs M.J."/>
            <person name="Zhiponova M.K."/>
            <person name="Gudesblat G.E."/>
            <person name="Vanhoutte I."/>
            <person name="Eeckhout D."/>
            <person name="Boeren S."/>
            <person name="Karimi M."/>
            <person name="Betti C."/>
            <person name="Jacobs T."/>
            <person name="Fenoll C."/>
            <person name="Mena M."/>
            <person name="de Vries S."/>
            <person name="De Jaeger G."/>
            <person name="Russinova E."/>
        </authorList>
    </citation>
    <scope>PHOSPHORYLATION</scope>
    <source>
        <strain>cv. Columbia</strain>
    </source>
</reference>
<sequence length="364" mass="40169">MQEIIPDFLEECEFVDTSLAGDDLFAILESLEGAGEISPTAASTPKDGTTSSKELVKDQDYENSSPKRKKQRLETRKEEDEEEEDGDGEAEEDNKQDGQQKMSHVTVERNRRKQMNEHLTVLRSLMPCFYVKRGDQASIIGGVVEYISELQQVLQSLEAKKQRKTYAEVLSPRVVPSPRPSPPVLSPRKPPLSPRINHHQIHHHLLLPPISPRTPQPTSPYRAIPPQLPLIPQPPLRSYSSLASCSSLGDPPPYSPASSSSSPSVSSNHESSVINELVANSKSALADVEVKFSGANVLLKTVSHKIPGQVMKIIAALEDLALEILQVNINTVDETMLNSFTIKIGIECQLSAEELAQQIQQTFC</sequence>
<protein>
    <recommendedName>
        <fullName evidence="18">Transcription factor SPEECHLESS</fullName>
    </recommendedName>
    <alternativeName>
        <fullName evidence="15 17">Basic helix-loop-helix protein 98</fullName>
        <shortName evidence="15 17">AtbHLH98</shortName>
        <shortName evidence="15 17">bHLH 98</shortName>
    </alternativeName>
    <alternativeName>
        <fullName evidence="16">Transcription factor EN 19</fullName>
    </alternativeName>
    <alternativeName>
        <fullName evidence="15 17">bHLH transcription factor bHLH098</fullName>
    </alternativeName>
</protein>
<gene>
    <name evidence="18" type="primary">SPCH</name>
    <name evidence="15 17" type="synonym">BHLH98</name>
    <name evidence="16" type="synonym">EN19</name>
    <name evidence="21" type="ordered locus">At5g53210</name>
    <name evidence="22" type="ORF">MFH8.15</name>
</gene>
<name>SPCH_ARATH</name>
<organism>
    <name type="scientific">Arabidopsis thaliana</name>
    <name type="common">Mouse-ear cress</name>
    <dbReference type="NCBI Taxonomy" id="3702"/>
    <lineage>
        <taxon>Eukaryota</taxon>
        <taxon>Viridiplantae</taxon>
        <taxon>Streptophyta</taxon>
        <taxon>Embryophyta</taxon>
        <taxon>Tracheophyta</taxon>
        <taxon>Spermatophyta</taxon>
        <taxon>Magnoliopsida</taxon>
        <taxon>eudicotyledons</taxon>
        <taxon>Gunneridae</taxon>
        <taxon>Pentapetalae</taxon>
        <taxon>rosids</taxon>
        <taxon>malvids</taxon>
        <taxon>Brassicales</taxon>
        <taxon>Brassicaceae</taxon>
        <taxon>Camelineae</taxon>
        <taxon>Arabidopsis</taxon>
    </lineage>
</organism>